<gene>
    <name type="primary">ykuH</name>
    <name type="ordered locus">BSU14080</name>
</gene>
<organism>
    <name type="scientific">Bacillus subtilis (strain 168)</name>
    <dbReference type="NCBI Taxonomy" id="224308"/>
    <lineage>
        <taxon>Bacteria</taxon>
        <taxon>Bacillati</taxon>
        <taxon>Bacillota</taxon>
        <taxon>Bacilli</taxon>
        <taxon>Bacillales</taxon>
        <taxon>Bacillaceae</taxon>
        <taxon>Bacillus</taxon>
    </lineage>
</organism>
<reference key="1">
    <citation type="journal article" date="1997" name="Nature">
        <title>The complete genome sequence of the Gram-positive bacterium Bacillus subtilis.</title>
        <authorList>
            <person name="Kunst F."/>
            <person name="Ogasawara N."/>
            <person name="Moszer I."/>
            <person name="Albertini A.M."/>
            <person name="Alloni G."/>
            <person name="Azevedo V."/>
            <person name="Bertero M.G."/>
            <person name="Bessieres P."/>
            <person name="Bolotin A."/>
            <person name="Borchert S."/>
            <person name="Borriss R."/>
            <person name="Boursier L."/>
            <person name="Brans A."/>
            <person name="Braun M."/>
            <person name="Brignell S.C."/>
            <person name="Bron S."/>
            <person name="Brouillet S."/>
            <person name="Bruschi C.V."/>
            <person name="Caldwell B."/>
            <person name="Capuano V."/>
            <person name="Carter N.M."/>
            <person name="Choi S.-K."/>
            <person name="Codani J.-J."/>
            <person name="Connerton I.F."/>
            <person name="Cummings N.J."/>
            <person name="Daniel R.A."/>
            <person name="Denizot F."/>
            <person name="Devine K.M."/>
            <person name="Duesterhoeft A."/>
            <person name="Ehrlich S.D."/>
            <person name="Emmerson P.T."/>
            <person name="Entian K.-D."/>
            <person name="Errington J."/>
            <person name="Fabret C."/>
            <person name="Ferrari E."/>
            <person name="Foulger D."/>
            <person name="Fritz C."/>
            <person name="Fujita M."/>
            <person name="Fujita Y."/>
            <person name="Fuma S."/>
            <person name="Galizzi A."/>
            <person name="Galleron N."/>
            <person name="Ghim S.-Y."/>
            <person name="Glaser P."/>
            <person name="Goffeau A."/>
            <person name="Golightly E.J."/>
            <person name="Grandi G."/>
            <person name="Guiseppi G."/>
            <person name="Guy B.J."/>
            <person name="Haga K."/>
            <person name="Haiech J."/>
            <person name="Harwood C.R."/>
            <person name="Henaut A."/>
            <person name="Hilbert H."/>
            <person name="Holsappel S."/>
            <person name="Hosono S."/>
            <person name="Hullo M.-F."/>
            <person name="Itaya M."/>
            <person name="Jones L.-M."/>
            <person name="Joris B."/>
            <person name="Karamata D."/>
            <person name="Kasahara Y."/>
            <person name="Klaerr-Blanchard M."/>
            <person name="Klein C."/>
            <person name="Kobayashi Y."/>
            <person name="Koetter P."/>
            <person name="Koningstein G."/>
            <person name="Krogh S."/>
            <person name="Kumano M."/>
            <person name="Kurita K."/>
            <person name="Lapidus A."/>
            <person name="Lardinois S."/>
            <person name="Lauber J."/>
            <person name="Lazarevic V."/>
            <person name="Lee S.-M."/>
            <person name="Levine A."/>
            <person name="Liu H."/>
            <person name="Masuda S."/>
            <person name="Mauel C."/>
            <person name="Medigue C."/>
            <person name="Medina N."/>
            <person name="Mellado R.P."/>
            <person name="Mizuno M."/>
            <person name="Moestl D."/>
            <person name="Nakai S."/>
            <person name="Noback M."/>
            <person name="Noone D."/>
            <person name="O'Reilly M."/>
            <person name="Ogawa K."/>
            <person name="Ogiwara A."/>
            <person name="Oudega B."/>
            <person name="Park S.-H."/>
            <person name="Parro V."/>
            <person name="Pohl T.M."/>
            <person name="Portetelle D."/>
            <person name="Porwollik S."/>
            <person name="Prescott A.M."/>
            <person name="Presecan E."/>
            <person name="Pujic P."/>
            <person name="Purnelle B."/>
            <person name="Rapoport G."/>
            <person name="Rey M."/>
            <person name="Reynolds S."/>
            <person name="Rieger M."/>
            <person name="Rivolta C."/>
            <person name="Rocha E."/>
            <person name="Roche B."/>
            <person name="Rose M."/>
            <person name="Sadaie Y."/>
            <person name="Sato T."/>
            <person name="Scanlan E."/>
            <person name="Schleich S."/>
            <person name="Schroeter R."/>
            <person name="Scoffone F."/>
            <person name="Sekiguchi J."/>
            <person name="Sekowska A."/>
            <person name="Seror S.J."/>
            <person name="Serror P."/>
            <person name="Shin B.-S."/>
            <person name="Soldo B."/>
            <person name="Sorokin A."/>
            <person name="Tacconi E."/>
            <person name="Takagi T."/>
            <person name="Takahashi H."/>
            <person name="Takemaru K."/>
            <person name="Takeuchi M."/>
            <person name="Tamakoshi A."/>
            <person name="Tanaka T."/>
            <person name="Terpstra P."/>
            <person name="Tognoni A."/>
            <person name="Tosato V."/>
            <person name="Uchiyama S."/>
            <person name="Vandenbol M."/>
            <person name="Vannier F."/>
            <person name="Vassarotti A."/>
            <person name="Viari A."/>
            <person name="Wambutt R."/>
            <person name="Wedler E."/>
            <person name="Wedler H."/>
            <person name="Weitzenegger T."/>
            <person name="Winters P."/>
            <person name="Wipat A."/>
            <person name="Yamamoto H."/>
            <person name="Yamane K."/>
            <person name="Yasumoto K."/>
            <person name="Yata K."/>
            <person name="Yoshida K."/>
            <person name="Yoshikawa H.-F."/>
            <person name="Zumstein E."/>
            <person name="Yoshikawa H."/>
            <person name="Danchin A."/>
        </authorList>
    </citation>
    <scope>NUCLEOTIDE SEQUENCE [LARGE SCALE GENOMIC DNA]</scope>
    <source>
        <strain>168</strain>
    </source>
</reference>
<dbReference type="EMBL" id="AL009126">
    <property type="protein sequence ID" value="CAB13281.1"/>
    <property type="molecule type" value="Genomic_DNA"/>
</dbReference>
<dbReference type="PIR" id="E69865">
    <property type="entry name" value="E69865"/>
</dbReference>
<dbReference type="RefSeq" id="NP_389291.1">
    <property type="nucleotide sequence ID" value="NC_000964.3"/>
</dbReference>
<dbReference type="RefSeq" id="WP_003244760.1">
    <property type="nucleotide sequence ID" value="NZ_OZ025638.1"/>
</dbReference>
<dbReference type="SMR" id="O31696"/>
<dbReference type="FunCoup" id="O31696">
    <property type="interactions" value="68"/>
</dbReference>
<dbReference type="STRING" id="224308.BSU14080"/>
<dbReference type="PaxDb" id="224308-BSU14080"/>
<dbReference type="EnsemblBacteria" id="CAB13281">
    <property type="protein sequence ID" value="CAB13281"/>
    <property type="gene ID" value="BSU_14080"/>
</dbReference>
<dbReference type="GeneID" id="939211"/>
<dbReference type="KEGG" id="bsu:BSU14080"/>
<dbReference type="PATRIC" id="fig|224308.179.peg.1536"/>
<dbReference type="InParanoid" id="O31696"/>
<dbReference type="OrthoDB" id="2912612at2"/>
<dbReference type="BioCyc" id="BSUB:BSU14080-MONOMER"/>
<dbReference type="Proteomes" id="UP000001570">
    <property type="component" value="Chromosome"/>
</dbReference>
<dbReference type="GO" id="GO:0016020">
    <property type="term" value="C:membrane"/>
    <property type="evidence" value="ECO:0007669"/>
    <property type="project" value="UniProtKB-SubCell"/>
</dbReference>
<proteinExistence type="inferred from homology"/>
<sequence>MKKLLKKLVVLFLSSLVIIFNVWYFIICAFSPEYYQNTNLTSNEIIRFEKLYHIDFPDETKFIKAREYLAGPGGDTSAVLYVSLPTKRVEKVLSDYTYMKINYTDNVGSMYGVDVSKSVAGLTTLTFGTYDKKGTFYNMKHDDDWMYKGTDWNLYFWTAASYNAVIFVFVLVIVKQMNKILN</sequence>
<keyword id="KW-0472">Membrane</keyword>
<keyword id="KW-1185">Reference proteome</keyword>
<keyword id="KW-0732">Signal</keyword>
<keyword id="KW-0812">Transmembrane</keyword>
<keyword id="KW-1133">Transmembrane helix</keyword>
<feature type="signal peptide" evidence="1">
    <location>
        <begin position="1"/>
        <end position="29"/>
    </location>
</feature>
<feature type="chain" id="PRO_0000013711" description="Uncharacterized protein YkuH">
    <location>
        <begin position="30"/>
        <end position="182"/>
    </location>
</feature>
<feature type="transmembrane region" description="Helical" evidence="1">
    <location>
        <begin position="152"/>
        <end position="174"/>
    </location>
</feature>
<name>YKUH_BACSU</name>
<protein>
    <recommendedName>
        <fullName>Uncharacterized protein YkuH</fullName>
    </recommendedName>
</protein>
<evidence type="ECO:0000255" key="1"/>
<evidence type="ECO:0000305" key="2"/>
<comment type="subcellular location">
    <subcellularLocation>
        <location evidence="2">Membrane</location>
        <topology evidence="2">Single-pass membrane protein</topology>
    </subcellularLocation>
</comment>
<accession>O31696</accession>